<reference key="1">
    <citation type="journal article" date="2001" name="Lancet">
        <title>Whole genome sequencing of meticillin-resistant Staphylococcus aureus.</title>
        <authorList>
            <person name="Kuroda M."/>
            <person name="Ohta T."/>
            <person name="Uchiyama I."/>
            <person name="Baba T."/>
            <person name="Yuzawa H."/>
            <person name="Kobayashi I."/>
            <person name="Cui L."/>
            <person name="Oguchi A."/>
            <person name="Aoki K."/>
            <person name="Nagai Y."/>
            <person name="Lian J.-Q."/>
            <person name="Ito T."/>
            <person name="Kanamori M."/>
            <person name="Matsumaru H."/>
            <person name="Maruyama A."/>
            <person name="Murakami H."/>
            <person name="Hosoyama A."/>
            <person name="Mizutani-Ui Y."/>
            <person name="Takahashi N.K."/>
            <person name="Sawano T."/>
            <person name="Inoue R."/>
            <person name="Kaito C."/>
            <person name="Sekimizu K."/>
            <person name="Hirakawa H."/>
            <person name="Kuhara S."/>
            <person name="Goto S."/>
            <person name="Yabuzaki J."/>
            <person name="Kanehisa M."/>
            <person name="Yamashita A."/>
            <person name="Oshima K."/>
            <person name="Furuya K."/>
            <person name="Yoshino C."/>
            <person name="Shiba T."/>
            <person name="Hattori M."/>
            <person name="Ogasawara N."/>
            <person name="Hayashi H."/>
            <person name="Hiramatsu K."/>
        </authorList>
    </citation>
    <scope>NUCLEOTIDE SEQUENCE [LARGE SCALE GENOMIC DNA]</scope>
    <source>
        <strain>N315</strain>
    </source>
</reference>
<reference key="2">
    <citation type="journal article" date="2005" name="J. Microbiol. Methods">
        <title>Correlation of proteomic and transcriptomic profiles of Staphylococcus aureus during the post-exponential phase of growth.</title>
        <authorList>
            <person name="Scherl A."/>
            <person name="Francois P."/>
            <person name="Bento M."/>
            <person name="Deshusses J.M."/>
            <person name="Charbonnier Y."/>
            <person name="Converset V."/>
            <person name="Huyghe A."/>
            <person name="Walter N."/>
            <person name="Hoogland C."/>
            <person name="Appel R.D."/>
            <person name="Sanchez J.-C."/>
            <person name="Zimmermann-Ivol C.G."/>
            <person name="Corthals G.L."/>
            <person name="Hochstrasser D.F."/>
            <person name="Schrenzel J."/>
        </authorList>
    </citation>
    <scope>IDENTIFICATION BY MASS SPECTROMETRY</scope>
    <source>
        <strain>N315</strain>
    </source>
</reference>
<reference key="3">
    <citation type="submission" date="2007-10" db="UniProtKB">
        <title>Shotgun proteomic analysis of total and membrane protein extracts of S. aureus strain N315.</title>
        <authorList>
            <person name="Vaezzadeh A.R."/>
            <person name="Deshusses J."/>
            <person name="Lescuyer P."/>
            <person name="Hochstrasser D.F."/>
        </authorList>
    </citation>
    <scope>IDENTIFICATION BY MASS SPECTROMETRY [LARGE SCALE ANALYSIS]</scope>
    <source>
        <strain>N315</strain>
    </source>
</reference>
<gene>
    <name evidence="2" type="primary">purF</name>
    <name type="ordered locus">SA0922</name>
</gene>
<feature type="propeptide" id="PRO_0000029265" evidence="1">
    <location>
        <begin position="1"/>
        <end position="10"/>
    </location>
</feature>
<feature type="chain" id="PRO_0000029266" description="Amidophosphoribosyltransferase">
    <location>
        <begin position="11"/>
        <end position="494"/>
    </location>
</feature>
<feature type="domain" description="Glutamine amidotransferase type-2" evidence="2">
    <location>
        <begin position="11"/>
        <end position="231"/>
    </location>
</feature>
<feature type="active site" description="Nucleophile" evidence="2">
    <location>
        <position position="11"/>
    </location>
</feature>
<feature type="binding site" evidence="2">
    <location>
        <position position="294"/>
    </location>
    <ligand>
        <name>Mg(2+)</name>
        <dbReference type="ChEBI" id="CHEBI:18420"/>
    </ligand>
</feature>
<feature type="binding site" evidence="2">
    <location>
        <position position="356"/>
    </location>
    <ligand>
        <name>Mg(2+)</name>
        <dbReference type="ChEBI" id="CHEBI:18420"/>
    </ligand>
</feature>
<feature type="binding site" evidence="2">
    <location>
        <position position="357"/>
    </location>
    <ligand>
        <name>Mg(2+)</name>
        <dbReference type="ChEBI" id="CHEBI:18420"/>
    </ligand>
</feature>
<accession>P99164</accession>
<accession>Q99V27</accession>
<dbReference type="EC" id="2.4.2.14" evidence="2"/>
<dbReference type="EMBL" id="BA000018">
    <property type="protein sequence ID" value="BAB42167.1"/>
    <property type="molecule type" value="Genomic_DNA"/>
</dbReference>
<dbReference type="PIR" id="D89876">
    <property type="entry name" value="D89876"/>
</dbReference>
<dbReference type="RefSeq" id="WP_000483720.1">
    <property type="nucleotide sequence ID" value="NC_002745.2"/>
</dbReference>
<dbReference type="SMR" id="P99164"/>
<dbReference type="MEROPS" id="C44.001"/>
<dbReference type="EnsemblBacteria" id="BAB42167">
    <property type="protein sequence ID" value="BAB42167"/>
    <property type="gene ID" value="BAB42167"/>
</dbReference>
<dbReference type="KEGG" id="sau:SA0922"/>
<dbReference type="HOGENOM" id="CLU_022389_3_1_9"/>
<dbReference type="UniPathway" id="UPA00074">
    <property type="reaction ID" value="UER00124"/>
</dbReference>
<dbReference type="GO" id="GO:0004044">
    <property type="term" value="F:amidophosphoribosyltransferase activity"/>
    <property type="evidence" value="ECO:0007669"/>
    <property type="project" value="UniProtKB-UniRule"/>
</dbReference>
<dbReference type="GO" id="GO:0000287">
    <property type="term" value="F:magnesium ion binding"/>
    <property type="evidence" value="ECO:0007669"/>
    <property type="project" value="UniProtKB-UniRule"/>
</dbReference>
<dbReference type="GO" id="GO:0006189">
    <property type="term" value="P:'de novo' IMP biosynthetic process"/>
    <property type="evidence" value="ECO:0007669"/>
    <property type="project" value="UniProtKB-UniRule"/>
</dbReference>
<dbReference type="GO" id="GO:0009113">
    <property type="term" value="P:purine nucleobase biosynthetic process"/>
    <property type="evidence" value="ECO:0007669"/>
    <property type="project" value="InterPro"/>
</dbReference>
<dbReference type="CDD" id="cd00715">
    <property type="entry name" value="GPATase_N"/>
    <property type="match status" value="1"/>
</dbReference>
<dbReference type="CDD" id="cd06223">
    <property type="entry name" value="PRTases_typeI"/>
    <property type="match status" value="1"/>
</dbReference>
<dbReference type="Gene3D" id="3.40.50.2020">
    <property type="match status" value="1"/>
</dbReference>
<dbReference type="Gene3D" id="3.60.20.10">
    <property type="entry name" value="Glutamine Phosphoribosylpyrophosphate, subunit 1, domain 1"/>
    <property type="match status" value="1"/>
</dbReference>
<dbReference type="HAMAP" id="MF_01931">
    <property type="entry name" value="PurF"/>
    <property type="match status" value="1"/>
</dbReference>
<dbReference type="InterPro" id="IPR017932">
    <property type="entry name" value="GATase_2_dom"/>
</dbReference>
<dbReference type="InterPro" id="IPR029055">
    <property type="entry name" value="Ntn_hydrolases_N"/>
</dbReference>
<dbReference type="InterPro" id="IPR000836">
    <property type="entry name" value="PRibTrfase_dom"/>
</dbReference>
<dbReference type="InterPro" id="IPR029057">
    <property type="entry name" value="PRTase-like"/>
</dbReference>
<dbReference type="InterPro" id="IPR005854">
    <property type="entry name" value="PurF"/>
</dbReference>
<dbReference type="InterPro" id="IPR035584">
    <property type="entry name" value="PurF_N"/>
</dbReference>
<dbReference type="NCBIfam" id="TIGR01134">
    <property type="entry name" value="purF"/>
    <property type="match status" value="1"/>
</dbReference>
<dbReference type="PANTHER" id="PTHR11907">
    <property type="entry name" value="AMIDOPHOSPHORIBOSYLTRANSFERASE"/>
    <property type="match status" value="1"/>
</dbReference>
<dbReference type="Pfam" id="PF13537">
    <property type="entry name" value="GATase_7"/>
    <property type="match status" value="1"/>
</dbReference>
<dbReference type="Pfam" id="PF00156">
    <property type="entry name" value="Pribosyltran"/>
    <property type="match status" value="1"/>
</dbReference>
<dbReference type="PIRSF" id="PIRSF000485">
    <property type="entry name" value="Amd_phspho_trans"/>
    <property type="match status" value="1"/>
</dbReference>
<dbReference type="SUPFAM" id="SSF56235">
    <property type="entry name" value="N-terminal nucleophile aminohydrolases (Ntn hydrolases)"/>
    <property type="match status" value="1"/>
</dbReference>
<dbReference type="SUPFAM" id="SSF53271">
    <property type="entry name" value="PRTase-like"/>
    <property type="match status" value="1"/>
</dbReference>
<dbReference type="PROSITE" id="PS51278">
    <property type="entry name" value="GATASE_TYPE_2"/>
    <property type="match status" value="1"/>
</dbReference>
<dbReference type="PROSITE" id="PS00103">
    <property type="entry name" value="PUR_PYR_PR_TRANSFER"/>
    <property type="match status" value="1"/>
</dbReference>
<organism>
    <name type="scientific">Staphylococcus aureus (strain N315)</name>
    <dbReference type="NCBI Taxonomy" id="158879"/>
    <lineage>
        <taxon>Bacteria</taxon>
        <taxon>Bacillati</taxon>
        <taxon>Bacillota</taxon>
        <taxon>Bacilli</taxon>
        <taxon>Bacillales</taxon>
        <taxon>Staphylococcaceae</taxon>
        <taxon>Staphylococcus</taxon>
    </lineage>
</organism>
<keyword id="KW-0315">Glutamine amidotransferase</keyword>
<keyword id="KW-0328">Glycosyltransferase</keyword>
<keyword id="KW-0460">Magnesium</keyword>
<keyword id="KW-0479">Metal-binding</keyword>
<keyword id="KW-0658">Purine biosynthesis</keyword>
<keyword id="KW-0808">Transferase</keyword>
<protein>
    <recommendedName>
        <fullName evidence="2">Amidophosphoribosyltransferase</fullName>
        <shortName evidence="2">ATase</shortName>
        <ecNumber evidence="2">2.4.2.14</ecNumber>
    </recommendedName>
    <alternativeName>
        <fullName evidence="2">Glutamine phosphoribosylpyrophosphate amidotransferase</fullName>
        <shortName evidence="2">GPATase</shortName>
    </alternativeName>
</protein>
<evidence type="ECO:0000250" key="1"/>
<evidence type="ECO:0000255" key="2">
    <source>
        <dbReference type="HAMAP-Rule" id="MF_01931"/>
    </source>
</evidence>
<name>PUR1_STAAN</name>
<comment type="function">
    <text evidence="2">Catalyzes the formation of phosphoribosylamine from phosphoribosylpyrophosphate (PRPP) and glutamine.</text>
</comment>
<comment type="catalytic activity">
    <reaction evidence="2">
        <text>5-phospho-beta-D-ribosylamine + L-glutamate + diphosphate = 5-phospho-alpha-D-ribose 1-diphosphate + L-glutamine + H2O</text>
        <dbReference type="Rhea" id="RHEA:14905"/>
        <dbReference type="ChEBI" id="CHEBI:15377"/>
        <dbReference type="ChEBI" id="CHEBI:29985"/>
        <dbReference type="ChEBI" id="CHEBI:33019"/>
        <dbReference type="ChEBI" id="CHEBI:58017"/>
        <dbReference type="ChEBI" id="CHEBI:58359"/>
        <dbReference type="ChEBI" id="CHEBI:58681"/>
        <dbReference type="EC" id="2.4.2.14"/>
    </reaction>
</comment>
<comment type="cofactor">
    <cofactor evidence="2">
        <name>Mg(2+)</name>
        <dbReference type="ChEBI" id="CHEBI:18420"/>
    </cofactor>
    <text evidence="2">Binds 1 Mg(2+) ion per subunit.</text>
</comment>
<comment type="pathway">
    <text evidence="2">Purine metabolism; IMP biosynthesis via de novo pathway; N(1)-(5-phospho-D-ribosyl)glycinamide from 5-phospho-alpha-D-ribose 1-diphosphate: step 1/2.</text>
</comment>
<comment type="similarity">
    <text evidence="2">In the C-terminal section; belongs to the purine/pyrimidine phosphoribosyltransferase family.</text>
</comment>
<proteinExistence type="evidence at protein level"/>
<sequence length="494" mass="54383">MFNYSGLNEECGVFGIWNHPEAAQLTYMGLHSLQHRGQEGAGIVVSDQNELKGERGLGLLTEAINDDQMERLKGYQHAIGHVRYATSGNKGIENIQPFLYHFYDMSVGICHNGNLINAKSLRQNLEKQGAIFHSSSDTEVIMHLIRRSKAPTFEEALKESLRKVKGGFTFAILTKDALYGAVDPNAIRPLVVGKMKDGTYILASETCAIDVLGAEFVQDIHAGEYVVINDKGITVKSYTHHTTTAISAMEYIYFARPDSTIAGKNVHAVRKASGKKLAQESPVNADMVIGVPNSSLSAASGYAEEIGLPYEMGLVKNQYVARTFIQPTQELREQGVRVKLSAVKDIVDGKNIILVDDSIVRGTTIRRIVKMLKDSGANKVHVRIASPEFMFPSFYGIDVSTTAELISASKSPEEIKDYIGADSLAYLSVDGLIESIGLDYDAPYSGLCVESFTGDYPAGLYDYEANYKAHLSHRQKQYISKNKHFFDSEGNLNV</sequence>